<protein>
    <recommendedName>
        <fullName>Ubiquitin-like protein 4B</fullName>
    </recommendedName>
</protein>
<evidence type="ECO:0000255" key="1">
    <source>
        <dbReference type="PROSITE-ProRule" id="PRU00214"/>
    </source>
</evidence>
<evidence type="ECO:0000256" key="2">
    <source>
        <dbReference type="SAM" id="MobiDB-lite"/>
    </source>
</evidence>
<evidence type="ECO:0000269" key="3">
    <source>
    </source>
</evidence>
<evidence type="ECO:0000305" key="4"/>
<organism>
    <name type="scientific">Mus musculus</name>
    <name type="common">Mouse</name>
    <dbReference type="NCBI Taxonomy" id="10090"/>
    <lineage>
        <taxon>Eukaryota</taxon>
        <taxon>Metazoa</taxon>
        <taxon>Chordata</taxon>
        <taxon>Craniata</taxon>
        <taxon>Vertebrata</taxon>
        <taxon>Euteleostomi</taxon>
        <taxon>Mammalia</taxon>
        <taxon>Eutheria</taxon>
        <taxon>Euarchontoglires</taxon>
        <taxon>Glires</taxon>
        <taxon>Rodentia</taxon>
        <taxon>Myomorpha</taxon>
        <taxon>Muroidea</taxon>
        <taxon>Muridae</taxon>
        <taxon>Murinae</taxon>
        <taxon>Mus</taxon>
        <taxon>Mus</taxon>
    </lineage>
</organism>
<reference key="1">
    <citation type="journal article" date="2005" name="Science">
        <title>The transcriptional landscape of the mammalian genome.</title>
        <authorList>
            <person name="Carninci P."/>
            <person name="Kasukawa T."/>
            <person name="Katayama S."/>
            <person name="Gough J."/>
            <person name="Frith M.C."/>
            <person name="Maeda N."/>
            <person name="Oyama R."/>
            <person name="Ravasi T."/>
            <person name="Lenhard B."/>
            <person name="Wells C."/>
            <person name="Kodzius R."/>
            <person name="Shimokawa K."/>
            <person name="Bajic V.B."/>
            <person name="Brenner S.E."/>
            <person name="Batalov S."/>
            <person name="Forrest A.R."/>
            <person name="Zavolan M."/>
            <person name="Davis M.J."/>
            <person name="Wilming L.G."/>
            <person name="Aidinis V."/>
            <person name="Allen J.E."/>
            <person name="Ambesi-Impiombato A."/>
            <person name="Apweiler R."/>
            <person name="Aturaliya R.N."/>
            <person name="Bailey T.L."/>
            <person name="Bansal M."/>
            <person name="Baxter L."/>
            <person name="Beisel K.W."/>
            <person name="Bersano T."/>
            <person name="Bono H."/>
            <person name="Chalk A.M."/>
            <person name="Chiu K.P."/>
            <person name="Choudhary V."/>
            <person name="Christoffels A."/>
            <person name="Clutterbuck D.R."/>
            <person name="Crowe M.L."/>
            <person name="Dalla E."/>
            <person name="Dalrymple B.P."/>
            <person name="de Bono B."/>
            <person name="Della Gatta G."/>
            <person name="di Bernardo D."/>
            <person name="Down T."/>
            <person name="Engstrom P."/>
            <person name="Fagiolini M."/>
            <person name="Faulkner G."/>
            <person name="Fletcher C.F."/>
            <person name="Fukushima T."/>
            <person name="Furuno M."/>
            <person name="Futaki S."/>
            <person name="Gariboldi M."/>
            <person name="Georgii-Hemming P."/>
            <person name="Gingeras T.R."/>
            <person name="Gojobori T."/>
            <person name="Green R.E."/>
            <person name="Gustincich S."/>
            <person name="Harbers M."/>
            <person name="Hayashi Y."/>
            <person name="Hensch T.K."/>
            <person name="Hirokawa N."/>
            <person name="Hill D."/>
            <person name="Huminiecki L."/>
            <person name="Iacono M."/>
            <person name="Ikeo K."/>
            <person name="Iwama A."/>
            <person name="Ishikawa T."/>
            <person name="Jakt M."/>
            <person name="Kanapin A."/>
            <person name="Katoh M."/>
            <person name="Kawasawa Y."/>
            <person name="Kelso J."/>
            <person name="Kitamura H."/>
            <person name="Kitano H."/>
            <person name="Kollias G."/>
            <person name="Krishnan S.P."/>
            <person name="Kruger A."/>
            <person name="Kummerfeld S.K."/>
            <person name="Kurochkin I.V."/>
            <person name="Lareau L.F."/>
            <person name="Lazarevic D."/>
            <person name="Lipovich L."/>
            <person name="Liu J."/>
            <person name="Liuni S."/>
            <person name="McWilliam S."/>
            <person name="Madan Babu M."/>
            <person name="Madera M."/>
            <person name="Marchionni L."/>
            <person name="Matsuda H."/>
            <person name="Matsuzawa S."/>
            <person name="Miki H."/>
            <person name="Mignone F."/>
            <person name="Miyake S."/>
            <person name="Morris K."/>
            <person name="Mottagui-Tabar S."/>
            <person name="Mulder N."/>
            <person name="Nakano N."/>
            <person name="Nakauchi H."/>
            <person name="Ng P."/>
            <person name="Nilsson R."/>
            <person name="Nishiguchi S."/>
            <person name="Nishikawa S."/>
            <person name="Nori F."/>
            <person name="Ohara O."/>
            <person name="Okazaki Y."/>
            <person name="Orlando V."/>
            <person name="Pang K.C."/>
            <person name="Pavan W.J."/>
            <person name="Pavesi G."/>
            <person name="Pesole G."/>
            <person name="Petrovsky N."/>
            <person name="Piazza S."/>
            <person name="Reed J."/>
            <person name="Reid J.F."/>
            <person name="Ring B.Z."/>
            <person name="Ringwald M."/>
            <person name="Rost B."/>
            <person name="Ruan Y."/>
            <person name="Salzberg S.L."/>
            <person name="Sandelin A."/>
            <person name="Schneider C."/>
            <person name="Schoenbach C."/>
            <person name="Sekiguchi K."/>
            <person name="Semple C.A."/>
            <person name="Seno S."/>
            <person name="Sessa L."/>
            <person name="Sheng Y."/>
            <person name="Shibata Y."/>
            <person name="Shimada H."/>
            <person name="Shimada K."/>
            <person name="Silva D."/>
            <person name="Sinclair B."/>
            <person name="Sperling S."/>
            <person name="Stupka E."/>
            <person name="Sugiura K."/>
            <person name="Sultana R."/>
            <person name="Takenaka Y."/>
            <person name="Taki K."/>
            <person name="Tammoja K."/>
            <person name="Tan S.L."/>
            <person name="Tang S."/>
            <person name="Taylor M.S."/>
            <person name="Tegner J."/>
            <person name="Teichmann S.A."/>
            <person name="Ueda H.R."/>
            <person name="van Nimwegen E."/>
            <person name="Verardo R."/>
            <person name="Wei C.L."/>
            <person name="Yagi K."/>
            <person name="Yamanishi H."/>
            <person name="Zabarovsky E."/>
            <person name="Zhu S."/>
            <person name="Zimmer A."/>
            <person name="Hide W."/>
            <person name="Bult C."/>
            <person name="Grimmond S.M."/>
            <person name="Teasdale R.D."/>
            <person name="Liu E.T."/>
            <person name="Brusic V."/>
            <person name="Quackenbush J."/>
            <person name="Wahlestedt C."/>
            <person name="Mattick J.S."/>
            <person name="Hume D.A."/>
            <person name="Kai C."/>
            <person name="Sasaki D."/>
            <person name="Tomaru Y."/>
            <person name="Fukuda S."/>
            <person name="Kanamori-Katayama M."/>
            <person name="Suzuki M."/>
            <person name="Aoki J."/>
            <person name="Arakawa T."/>
            <person name="Iida J."/>
            <person name="Imamura K."/>
            <person name="Itoh M."/>
            <person name="Kato T."/>
            <person name="Kawaji H."/>
            <person name="Kawagashira N."/>
            <person name="Kawashima T."/>
            <person name="Kojima M."/>
            <person name="Kondo S."/>
            <person name="Konno H."/>
            <person name="Nakano K."/>
            <person name="Ninomiya N."/>
            <person name="Nishio T."/>
            <person name="Okada M."/>
            <person name="Plessy C."/>
            <person name="Shibata K."/>
            <person name="Shiraki T."/>
            <person name="Suzuki S."/>
            <person name="Tagami M."/>
            <person name="Waki K."/>
            <person name="Watahiki A."/>
            <person name="Okamura-Oho Y."/>
            <person name="Suzuki H."/>
            <person name="Kawai J."/>
            <person name="Hayashizaki Y."/>
        </authorList>
    </citation>
    <scope>NUCLEOTIDE SEQUENCE [LARGE SCALE MRNA]</scope>
    <source>
        <strain>C57BL/6J</strain>
        <tissue>Testis</tissue>
    </source>
</reference>
<reference key="2">
    <citation type="journal article" date="2004" name="Genome Res.">
        <title>The status, quality, and expansion of the NIH full-length cDNA project: the Mammalian Gene Collection (MGC).</title>
        <authorList>
            <consortium name="The MGC Project Team"/>
        </authorList>
    </citation>
    <scope>NUCLEOTIDE SEQUENCE [LARGE SCALE MRNA]</scope>
    <source>
        <tissue>Testis</tissue>
    </source>
</reference>
<reference key="3">
    <citation type="journal article" date="2007" name="Gene Expr. Patterns">
        <title>Ubl4b, an X-derived retrogene, is specifically expressed in post-meiotic germ cells in mammals.</title>
        <authorList>
            <person name="Yang F."/>
            <person name="Skaletsky H."/>
            <person name="Wang P.J."/>
        </authorList>
    </citation>
    <scope>SUBCELLULAR LOCATION</scope>
    <scope>TISSUE SPECIFICITY</scope>
</reference>
<sequence>MFLTVKLLLGRRCSLKVSGKESVATLKKLVSQHLQVPEEQQHLLFRGQLLADDKYLSDYSIGPNASINVIMRPPEDAALDKTHQTQPLWLQLGQVLDKHFGAKDAKTVLGFLRQEHEERLQRLSLEALEQLVGQLLAQQQLDELAEEKEAPAVASELEQNNGGGGGGGGTGGEGGGKKEEEEGEEADQ</sequence>
<proteinExistence type="evidence at transcript level"/>
<feature type="chain" id="PRO_0000263702" description="Ubiquitin-like protein 4B">
    <location>
        <begin position="1"/>
        <end position="188"/>
    </location>
</feature>
<feature type="domain" description="Ubiquitin-like" evidence="1">
    <location>
        <begin position="1"/>
        <end position="76"/>
    </location>
</feature>
<feature type="region of interest" description="Disordered" evidence="2">
    <location>
        <begin position="146"/>
        <end position="188"/>
    </location>
</feature>
<feature type="compositionally biased region" description="Gly residues" evidence="2">
    <location>
        <begin position="161"/>
        <end position="174"/>
    </location>
</feature>
<accession>Q9CQ84</accession>
<accession>Q5RL34</accession>
<dbReference type="EMBL" id="AK006408">
    <property type="protein sequence ID" value="BAB24573.1"/>
    <property type="molecule type" value="mRNA"/>
</dbReference>
<dbReference type="EMBL" id="AK015868">
    <property type="protein sequence ID" value="BAB30008.1"/>
    <property type="molecule type" value="mRNA"/>
</dbReference>
<dbReference type="EMBL" id="AK016746">
    <property type="protein sequence ID" value="BAB30407.1"/>
    <property type="molecule type" value="mRNA"/>
</dbReference>
<dbReference type="EMBL" id="BC048443">
    <property type="protein sequence ID" value="AAH48443.1"/>
    <property type="status" value="ALT_FRAME"/>
    <property type="molecule type" value="mRNA"/>
</dbReference>
<dbReference type="EMBL" id="BC061071">
    <property type="protein sequence ID" value="AAH61071.1"/>
    <property type="molecule type" value="mRNA"/>
</dbReference>
<dbReference type="CCDS" id="CCDS38592.1"/>
<dbReference type="RefSeq" id="NP_080537.1">
    <property type="nucleotide sequence ID" value="NM_026261.2"/>
</dbReference>
<dbReference type="SMR" id="Q9CQ84"/>
<dbReference type="FunCoup" id="Q9CQ84">
    <property type="interactions" value="3"/>
</dbReference>
<dbReference type="IntAct" id="Q9CQ84">
    <property type="interactions" value="1"/>
</dbReference>
<dbReference type="STRING" id="10090.ENSMUSP00000100577"/>
<dbReference type="PaxDb" id="10090-ENSMUSP00000100577"/>
<dbReference type="ProteomicsDB" id="298452"/>
<dbReference type="Antibodypedia" id="33782">
    <property type="antibodies" value="62 antibodies from 17 providers"/>
</dbReference>
<dbReference type="DNASU" id="67591"/>
<dbReference type="Ensembl" id="ENSMUST00000052853.8">
    <property type="protein sequence ID" value="ENSMUSP00000100577.3"/>
    <property type="gene ID" value="ENSMUSG00000055891.8"/>
</dbReference>
<dbReference type="GeneID" id="67591"/>
<dbReference type="KEGG" id="mmu:67591"/>
<dbReference type="UCSC" id="uc008qxe.1">
    <property type="organism name" value="mouse"/>
</dbReference>
<dbReference type="AGR" id="MGI:1914841"/>
<dbReference type="CTD" id="164153"/>
<dbReference type="MGI" id="MGI:1914841">
    <property type="gene designation" value="Ubl4b"/>
</dbReference>
<dbReference type="VEuPathDB" id="HostDB:ENSMUSG00000055891"/>
<dbReference type="eggNOG" id="KOG0001">
    <property type="taxonomic scope" value="Eukaryota"/>
</dbReference>
<dbReference type="GeneTree" id="ENSGT00940000163477"/>
<dbReference type="HOGENOM" id="CLU_119809_0_0_1"/>
<dbReference type="InParanoid" id="Q9CQ84"/>
<dbReference type="OMA" id="ASINVIM"/>
<dbReference type="OrthoDB" id="417450at2759"/>
<dbReference type="PhylomeDB" id="Q9CQ84"/>
<dbReference type="TreeFam" id="TF354228"/>
<dbReference type="BioGRID-ORCS" id="67591">
    <property type="hits" value="2 hits in 78 CRISPR screens"/>
</dbReference>
<dbReference type="ChiTaRS" id="Ubl4b">
    <property type="organism name" value="mouse"/>
</dbReference>
<dbReference type="PRO" id="PR:Q9CQ84"/>
<dbReference type="Proteomes" id="UP000000589">
    <property type="component" value="Chromosome 3"/>
</dbReference>
<dbReference type="RNAct" id="Q9CQ84">
    <property type="molecule type" value="protein"/>
</dbReference>
<dbReference type="Bgee" id="ENSMUSG00000055891">
    <property type="expression patterns" value="Expressed in seminiferous tubule of testis and 21 other cell types or tissues"/>
</dbReference>
<dbReference type="GO" id="GO:0005737">
    <property type="term" value="C:cytoplasm"/>
    <property type="evidence" value="ECO:0007669"/>
    <property type="project" value="UniProtKB-SubCell"/>
</dbReference>
<dbReference type="Gene3D" id="3.10.20.90">
    <property type="entry name" value="Phosphatidylinositol 3-kinase Catalytic Subunit, Chain A, domain 1"/>
    <property type="match status" value="1"/>
</dbReference>
<dbReference type="InterPro" id="IPR000626">
    <property type="entry name" value="Ubiquitin-like_dom"/>
</dbReference>
<dbReference type="InterPro" id="IPR029071">
    <property type="entry name" value="Ubiquitin-like_domsf"/>
</dbReference>
<dbReference type="InterPro" id="IPR019956">
    <property type="entry name" value="Ubiquitin_dom"/>
</dbReference>
<dbReference type="InterPro" id="IPR041421">
    <property type="entry name" value="Ubl4_C_TUGS"/>
</dbReference>
<dbReference type="InterPro" id="IPR043317">
    <property type="entry name" value="UBL4B"/>
</dbReference>
<dbReference type="PANTHER" id="PTHR47905">
    <property type="entry name" value="UBIQUITIN-LIKE PROTEIN 4B"/>
    <property type="match status" value="1"/>
</dbReference>
<dbReference type="PANTHER" id="PTHR47905:SF1">
    <property type="entry name" value="UBIQUITIN-LIKE PROTEIN 4B"/>
    <property type="match status" value="1"/>
</dbReference>
<dbReference type="Pfam" id="PF17840">
    <property type="entry name" value="Tugs"/>
    <property type="match status" value="1"/>
</dbReference>
<dbReference type="Pfam" id="PF00240">
    <property type="entry name" value="ubiquitin"/>
    <property type="match status" value="1"/>
</dbReference>
<dbReference type="PRINTS" id="PR00348">
    <property type="entry name" value="UBIQUITIN"/>
</dbReference>
<dbReference type="SMART" id="SM00213">
    <property type="entry name" value="UBQ"/>
    <property type="match status" value="1"/>
</dbReference>
<dbReference type="SUPFAM" id="SSF54236">
    <property type="entry name" value="Ubiquitin-like"/>
    <property type="match status" value="1"/>
</dbReference>
<dbReference type="PROSITE" id="PS50053">
    <property type="entry name" value="UBIQUITIN_2"/>
    <property type="match status" value="1"/>
</dbReference>
<gene>
    <name type="primary">Ubl4b</name>
</gene>
<comment type="subcellular location">
    <subcellularLocation>
        <location evidence="3">Cytoplasm</location>
    </subcellularLocation>
</comment>
<comment type="tissue specificity">
    <text evidence="3">Expressed specifically in post-meiotic male germ cells of the testis. Abundantly expressed in stage 14-16 spermatids.</text>
</comment>
<comment type="miscellaneous">
    <text>May have arisen from retrotransposition of the X-linked Ubl4a gene during mammalian evolution.</text>
</comment>
<comment type="sequence caution" evidence="4">
    <conflict type="frameshift">
        <sequence resource="EMBL-CDS" id="AAH48443"/>
    </conflict>
</comment>
<keyword id="KW-0963">Cytoplasm</keyword>
<keyword id="KW-1185">Reference proteome</keyword>
<name>UBL4B_MOUSE</name>